<name>DEPD4_HUMAN</name>
<sequence>MVPGEEPARELMAVLLTPRFRRLVSQNELPGPGLNGPSSRNRRDGFCRKRRTGCSGPFQATQLWDGIIHSLQAQVEIKRRRHHLQTYKDCFTGSDAVDVVLSHLMQNTCLSSNDISCLKGVHLCQVLMNHKVFEPVGMKKLFKKEKELEFEDSNISLYRFLGNKSSYDCCKRQKDAENEFNETLRPGYEMISNPLAQEIGEERIEELIHTINGNPALCPNITVQKPFLRLSKEDVWKEQTLLCLLQLIHLPFLDNILEPPVKTQNLQLNKEEDLVITNTCLDRELIPSLCLPEK</sequence>
<comment type="alternative products">
    <event type="alternative splicing"/>
    <isoform>
        <id>Q8N2C3-1</id>
        <name>1</name>
        <sequence type="displayed"/>
    </isoform>
    <isoform>
        <id>Q8N2C3-2</id>
        <name>2</name>
        <sequence type="described" ref="VSP_024646 VSP_024647"/>
    </isoform>
</comment>
<organism>
    <name type="scientific">Homo sapiens</name>
    <name type="common">Human</name>
    <dbReference type="NCBI Taxonomy" id="9606"/>
    <lineage>
        <taxon>Eukaryota</taxon>
        <taxon>Metazoa</taxon>
        <taxon>Chordata</taxon>
        <taxon>Craniata</taxon>
        <taxon>Vertebrata</taxon>
        <taxon>Euteleostomi</taxon>
        <taxon>Mammalia</taxon>
        <taxon>Eutheria</taxon>
        <taxon>Euarchontoglires</taxon>
        <taxon>Primates</taxon>
        <taxon>Haplorrhini</taxon>
        <taxon>Catarrhini</taxon>
        <taxon>Hominidae</taxon>
        <taxon>Homo</taxon>
    </lineage>
</organism>
<evidence type="ECO:0000255" key="1">
    <source>
        <dbReference type="PROSITE-ProRule" id="PRU00066"/>
    </source>
</evidence>
<evidence type="ECO:0000303" key="2">
    <source>
    </source>
</evidence>
<evidence type="ECO:0000305" key="3"/>
<proteinExistence type="evidence at transcript level"/>
<keyword id="KW-0025">Alternative splicing</keyword>
<keyword id="KW-1185">Reference proteome</keyword>
<reference key="1">
    <citation type="journal article" date="2004" name="Nat. Genet.">
        <title>Complete sequencing and characterization of 21,243 full-length human cDNAs.</title>
        <authorList>
            <person name="Ota T."/>
            <person name="Suzuki Y."/>
            <person name="Nishikawa T."/>
            <person name="Otsuki T."/>
            <person name="Sugiyama T."/>
            <person name="Irie R."/>
            <person name="Wakamatsu A."/>
            <person name="Hayashi K."/>
            <person name="Sato H."/>
            <person name="Nagai K."/>
            <person name="Kimura K."/>
            <person name="Makita H."/>
            <person name="Sekine M."/>
            <person name="Obayashi M."/>
            <person name="Nishi T."/>
            <person name="Shibahara T."/>
            <person name="Tanaka T."/>
            <person name="Ishii S."/>
            <person name="Yamamoto J."/>
            <person name="Saito K."/>
            <person name="Kawai Y."/>
            <person name="Isono Y."/>
            <person name="Nakamura Y."/>
            <person name="Nagahari K."/>
            <person name="Murakami K."/>
            <person name="Yasuda T."/>
            <person name="Iwayanagi T."/>
            <person name="Wagatsuma M."/>
            <person name="Shiratori A."/>
            <person name="Sudo H."/>
            <person name="Hosoiri T."/>
            <person name="Kaku Y."/>
            <person name="Kodaira H."/>
            <person name="Kondo H."/>
            <person name="Sugawara M."/>
            <person name="Takahashi M."/>
            <person name="Kanda K."/>
            <person name="Yokoi T."/>
            <person name="Furuya T."/>
            <person name="Kikkawa E."/>
            <person name="Omura Y."/>
            <person name="Abe K."/>
            <person name="Kamihara K."/>
            <person name="Katsuta N."/>
            <person name="Sato K."/>
            <person name="Tanikawa M."/>
            <person name="Yamazaki M."/>
            <person name="Ninomiya K."/>
            <person name="Ishibashi T."/>
            <person name="Yamashita H."/>
            <person name="Murakawa K."/>
            <person name="Fujimori K."/>
            <person name="Tanai H."/>
            <person name="Kimata M."/>
            <person name="Watanabe M."/>
            <person name="Hiraoka S."/>
            <person name="Chiba Y."/>
            <person name="Ishida S."/>
            <person name="Ono Y."/>
            <person name="Takiguchi S."/>
            <person name="Watanabe S."/>
            <person name="Yosida M."/>
            <person name="Hotuta T."/>
            <person name="Kusano J."/>
            <person name="Kanehori K."/>
            <person name="Takahashi-Fujii A."/>
            <person name="Hara H."/>
            <person name="Tanase T.-O."/>
            <person name="Nomura Y."/>
            <person name="Togiya S."/>
            <person name="Komai F."/>
            <person name="Hara R."/>
            <person name="Takeuchi K."/>
            <person name="Arita M."/>
            <person name="Imose N."/>
            <person name="Musashino K."/>
            <person name="Yuuki H."/>
            <person name="Oshima A."/>
            <person name="Sasaki N."/>
            <person name="Aotsuka S."/>
            <person name="Yoshikawa Y."/>
            <person name="Matsunawa H."/>
            <person name="Ichihara T."/>
            <person name="Shiohata N."/>
            <person name="Sano S."/>
            <person name="Moriya S."/>
            <person name="Momiyama H."/>
            <person name="Satoh N."/>
            <person name="Takami S."/>
            <person name="Terashima Y."/>
            <person name="Suzuki O."/>
            <person name="Nakagawa S."/>
            <person name="Senoh A."/>
            <person name="Mizoguchi H."/>
            <person name="Goto Y."/>
            <person name="Shimizu F."/>
            <person name="Wakebe H."/>
            <person name="Hishigaki H."/>
            <person name="Watanabe T."/>
            <person name="Sugiyama A."/>
            <person name="Takemoto M."/>
            <person name="Kawakami B."/>
            <person name="Yamazaki M."/>
            <person name="Watanabe K."/>
            <person name="Kumagai A."/>
            <person name="Itakura S."/>
            <person name="Fukuzumi Y."/>
            <person name="Fujimori Y."/>
            <person name="Komiyama M."/>
            <person name="Tashiro H."/>
            <person name="Tanigami A."/>
            <person name="Fujiwara T."/>
            <person name="Ono T."/>
            <person name="Yamada K."/>
            <person name="Fujii Y."/>
            <person name="Ozaki K."/>
            <person name="Hirao M."/>
            <person name="Ohmori Y."/>
            <person name="Kawabata A."/>
            <person name="Hikiji T."/>
            <person name="Kobatake N."/>
            <person name="Inagaki H."/>
            <person name="Ikema Y."/>
            <person name="Okamoto S."/>
            <person name="Okitani R."/>
            <person name="Kawakami T."/>
            <person name="Noguchi S."/>
            <person name="Itoh T."/>
            <person name="Shigeta K."/>
            <person name="Senba T."/>
            <person name="Matsumura K."/>
            <person name="Nakajima Y."/>
            <person name="Mizuno T."/>
            <person name="Morinaga M."/>
            <person name="Sasaki M."/>
            <person name="Togashi T."/>
            <person name="Oyama M."/>
            <person name="Hata H."/>
            <person name="Watanabe M."/>
            <person name="Komatsu T."/>
            <person name="Mizushima-Sugano J."/>
            <person name="Satoh T."/>
            <person name="Shirai Y."/>
            <person name="Takahashi Y."/>
            <person name="Nakagawa K."/>
            <person name="Okumura K."/>
            <person name="Nagase T."/>
            <person name="Nomura N."/>
            <person name="Kikuchi H."/>
            <person name="Masuho Y."/>
            <person name="Yamashita R."/>
            <person name="Nakai K."/>
            <person name="Yada T."/>
            <person name="Nakamura Y."/>
            <person name="Ohara O."/>
            <person name="Isogai T."/>
            <person name="Sugano S."/>
        </authorList>
    </citation>
    <scope>NUCLEOTIDE SEQUENCE [LARGE SCALE MRNA] (ISOFORM 1)</scope>
    <source>
        <tissue>Amygdala</tissue>
    </source>
</reference>
<reference key="2">
    <citation type="journal article" date="2004" name="Genome Res.">
        <title>The status, quality, and expansion of the NIH full-length cDNA project: the Mammalian Gene Collection (MGC).</title>
        <authorList>
            <consortium name="The MGC Project Team"/>
        </authorList>
    </citation>
    <scope>NUCLEOTIDE SEQUENCE [LARGE SCALE MRNA] (ISOFORM 2)</scope>
    <scope>NUCLEOTIDE SEQUENCE [LARGE SCALE MRNA] OF 34-294 (ISOFORM 1)</scope>
    <source>
        <tissue>Urinary bladder</tissue>
    </source>
</reference>
<feature type="chain" id="PRO_0000284783" description="DEP domain-containing protein 4">
    <location>
        <begin position="1"/>
        <end position="294"/>
    </location>
</feature>
<feature type="domain" description="DEP" evidence="1">
    <location>
        <begin position="71"/>
        <end position="162"/>
    </location>
</feature>
<feature type="splice variant" id="VSP_024646" description="In isoform 2." evidence="2">
    <original>GCSGP</original>
    <variation>DQDMK</variation>
    <location>
        <begin position="53"/>
        <end position="57"/>
    </location>
</feature>
<feature type="splice variant" id="VSP_024647" description="In isoform 2." evidence="2">
    <location>
        <begin position="58"/>
        <end position="294"/>
    </location>
</feature>
<feature type="sequence variant" id="VAR_031815" description="In dbSNP:rs7307415.">
    <original>H</original>
    <variation>R</variation>
    <location>
        <position position="122"/>
    </location>
</feature>
<feature type="sequence conflict" description="In Ref. 2; AAH15117." evidence="3" ref="2">
    <original>L</original>
    <variation>G</variation>
    <location>
        <position position="34"/>
    </location>
</feature>
<accession>Q8N2C3</accession>
<accession>Q496C8</accession>
<accession>Q96BW0</accession>
<dbReference type="EMBL" id="AK090824">
    <property type="protein sequence ID" value="BAC03525.1"/>
    <property type="molecule type" value="mRNA"/>
</dbReference>
<dbReference type="EMBL" id="BC015117">
    <property type="protein sequence ID" value="AAH15117.1"/>
    <property type="molecule type" value="mRNA"/>
</dbReference>
<dbReference type="EMBL" id="BC100929">
    <property type="protein sequence ID" value="AAI00930.1"/>
    <property type="molecule type" value="mRNA"/>
</dbReference>
<dbReference type="CCDS" id="CCDS9075.1">
    <molecule id="Q8N2C3-1"/>
</dbReference>
<dbReference type="RefSeq" id="NP_001306239.1">
    <property type="nucleotide sequence ID" value="NM_001319310.1"/>
</dbReference>
<dbReference type="RefSeq" id="NP_689530.1">
    <molecule id="Q8N2C3-1"/>
    <property type="nucleotide sequence ID" value="NM_152317.4"/>
</dbReference>
<dbReference type="STRING" id="9606.ENSP00000396234"/>
<dbReference type="iPTMnet" id="Q8N2C3"/>
<dbReference type="PhosphoSitePlus" id="Q8N2C3"/>
<dbReference type="BioMuta" id="DEPDC4"/>
<dbReference type="DMDM" id="74728709"/>
<dbReference type="PaxDb" id="9606-ENSP00000396234"/>
<dbReference type="PeptideAtlas" id="Q8N2C3"/>
<dbReference type="Antibodypedia" id="51125">
    <property type="antibodies" value="23 antibodies from 15 providers"/>
</dbReference>
<dbReference type="DNASU" id="120863"/>
<dbReference type="Ensembl" id="ENST00000299185.12">
    <molecule id="Q8N2C3-2"/>
    <property type="protein sequence ID" value="ENSP00000299185.8"/>
    <property type="gene ID" value="ENSG00000166153.17"/>
</dbReference>
<dbReference type="Ensembl" id="ENST00000378244.6">
    <molecule id="Q8N2C3-1"/>
    <property type="protein sequence ID" value="ENSP00000367490.2"/>
    <property type="gene ID" value="ENSG00000166153.17"/>
</dbReference>
<dbReference type="Ensembl" id="ENST00000416321.5">
    <molecule id="Q8N2C3-1"/>
    <property type="protein sequence ID" value="ENSP00000396234.1"/>
    <property type="gene ID" value="ENSG00000166153.17"/>
</dbReference>
<dbReference type="Ensembl" id="ENST00000549341.1">
    <molecule id="Q8N2C3-2"/>
    <property type="protein sequence ID" value="ENSP00000447392.1"/>
    <property type="gene ID" value="ENSG00000166153.17"/>
</dbReference>
<dbReference type="GeneID" id="120863"/>
<dbReference type="KEGG" id="hsa:120863"/>
<dbReference type="UCSC" id="uc001thh.2">
    <molecule id="Q8N2C3-1"/>
    <property type="organism name" value="human"/>
</dbReference>
<dbReference type="AGR" id="HGNC:22952"/>
<dbReference type="CTD" id="120863"/>
<dbReference type="DisGeNET" id="120863"/>
<dbReference type="GeneCards" id="DEPDC4"/>
<dbReference type="HGNC" id="HGNC:22952">
    <property type="gene designation" value="DEPDC4"/>
</dbReference>
<dbReference type="HPA" id="ENSG00000166153">
    <property type="expression patterns" value="Tissue enhanced (testis)"/>
</dbReference>
<dbReference type="neXtProt" id="NX_Q8N2C3"/>
<dbReference type="OpenTargets" id="ENSG00000166153"/>
<dbReference type="PharmGKB" id="PA134981607"/>
<dbReference type="VEuPathDB" id="HostDB:ENSG00000166153"/>
<dbReference type="eggNOG" id="ENOG502QW4D">
    <property type="taxonomic scope" value="Eukaryota"/>
</dbReference>
<dbReference type="GeneTree" id="ENSGT00950000182976"/>
<dbReference type="HOGENOM" id="CLU_3092752_0_0_1"/>
<dbReference type="InParanoid" id="Q8N2C3"/>
<dbReference type="OMA" id="LWEGIIH"/>
<dbReference type="OrthoDB" id="276323at2759"/>
<dbReference type="PAN-GO" id="Q8N2C3">
    <property type="GO annotations" value="0 GO annotations based on evolutionary models"/>
</dbReference>
<dbReference type="PhylomeDB" id="Q8N2C3"/>
<dbReference type="PathwayCommons" id="Q8N2C3"/>
<dbReference type="BioGRID-ORCS" id="120863">
    <property type="hits" value="12 hits in 1150 CRISPR screens"/>
</dbReference>
<dbReference type="ChiTaRS" id="DEPDC4">
    <property type="organism name" value="human"/>
</dbReference>
<dbReference type="GenomeRNAi" id="120863"/>
<dbReference type="Pharos" id="Q8N2C3">
    <property type="development level" value="Tdark"/>
</dbReference>
<dbReference type="PRO" id="PR:Q8N2C3"/>
<dbReference type="Proteomes" id="UP000005640">
    <property type="component" value="Chromosome 12"/>
</dbReference>
<dbReference type="RNAct" id="Q8N2C3">
    <property type="molecule type" value="protein"/>
</dbReference>
<dbReference type="Bgee" id="ENSG00000166153">
    <property type="expression patterns" value="Expressed in male germ line stem cell (sensu Vertebrata) in testis and 93 other cell types or tissues"/>
</dbReference>
<dbReference type="ExpressionAtlas" id="Q8N2C3">
    <property type="expression patterns" value="baseline and differential"/>
</dbReference>
<dbReference type="GO" id="GO:0035556">
    <property type="term" value="P:intracellular signal transduction"/>
    <property type="evidence" value="ECO:0007669"/>
    <property type="project" value="InterPro"/>
</dbReference>
<dbReference type="CDD" id="cd04446">
    <property type="entry name" value="DEP_DEPDC4"/>
    <property type="match status" value="1"/>
</dbReference>
<dbReference type="Gene3D" id="1.10.10.10">
    <property type="entry name" value="Winged helix-like DNA-binding domain superfamily/Winged helix DNA-binding domain"/>
    <property type="match status" value="1"/>
</dbReference>
<dbReference type="InterPro" id="IPR000591">
    <property type="entry name" value="DEP_dom"/>
</dbReference>
<dbReference type="InterPro" id="IPR036388">
    <property type="entry name" value="WH-like_DNA-bd_sf"/>
</dbReference>
<dbReference type="InterPro" id="IPR036390">
    <property type="entry name" value="WH_DNA-bd_sf"/>
</dbReference>
<dbReference type="PANTHER" id="PTHR16206">
    <property type="entry name" value="DEP DOMAIN-CONTAINING"/>
    <property type="match status" value="1"/>
</dbReference>
<dbReference type="PANTHER" id="PTHR16206:SF10">
    <property type="entry name" value="DEP DOMAIN-CONTAINING PROTEIN 4"/>
    <property type="match status" value="1"/>
</dbReference>
<dbReference type="Pfam" id="PF00610">
    <property type="entry name" value="DEP"/>
    <property type="match status" value="1"/>
</dbReference>
<dbReference type="SMART" id="SM00049">
    <property type="entry name" value="DEP"/>
    <property type="match status" value="1"/>
</dbReference>
<dbReference type="SUPFAM" id="SSF46785">
    <property type="entry name" value="Winged helix' DNA-binding domain"/>
    <property type="match status" value="1"/>
</dbReference>
<dbReference type="PROSITE" id="PS50186">
    <property type="entry name" value="DEP"/>
    <property type="match status" value="1"/>
</dbReference>
<gene>
    <name type="primary">DEPDC4</name>
</gene>
<protein>
    <recommendedName>
        <fullName>DEP domain-containing protein 4</fullName>
    </recommendedName>
</protein>